<feature type="initiator methionine" description="Removed" evidence="11">
    <location>
        <position position="1"/>
    </location>
</feature>
<feature type="chain" id="PRO_0000112121" description="Pyruvate kinase 1">
    <location>
        <begin position="2"/>
        <end position="500"/>
    </location>
</feature>
<feature type="binding site" evidence="5 10">
    <location>
        <position position="49"/>
    </location>
    <ligand>
        <name>substrate</name>
    </ligand>
</feature>
<feature type="binding site" evidence="1">
    <location>
        <begin position="51"/>
        <end position="54"/>
    </location>
    <ligand>
        <name>ATP</name>
        <dbReference type="ChEBI" id="CHEBI:30616"/>
    </ligand>
</feature>
<feature type="binding site" evidence="5 9 10">
    <location>
        <position position="51"/>
    </location>
    <ligand>
        <name>K(+)</name>
        <dbReference type="ChEBI" id="CHEBI:29103"/>
    </ligand>
</feature>
<feature type="binding site" evidence="5 9 10">
    <location>
        <position position="53"/>
    </location>
    <ligand>
        <name>K(+)</name>
        <dbReference type="ChEBI" id="CHEBI:29103"/>
    </ligand>
</feature>
<feature type="binding site" evidence="5 9 10">
    <location>
        <position position="84"/>
    </location>
    <ligand>
        <name>K(+)</name>
        <dbReference type="ChEBI" id="CHEBI:29103"/>
    </ligand>
</feature>
<feature type="binding site" evidence="5 9 10">
    <location>
        <position position="85"/>
    </location>
    <ligand>
        <name>K(+)</name>
        <dbReference type="ChEBI" id="CHEBI:29103"/>
    </ligand>
</feature>
<feature type="binding site" evidence="1">
    <location>
        <position position="91"/>
    </location>
    <ligand>
        <name>ATP</name>
        <dbReference type="ChEBI" id="CHEBI:30616"/>
    </ligand>
</feature>
<feature type="binding site" evidence="1">
    <location>
        <position position="177"/>
    </location>
    <ligand>
        <name>ATP</name>
        <dbReference type="ChEBI" id="CHEBI:30616"/>
    </ligand>
</feature>
<feature type="binding site" evidence="5 10">
    <location>
        <position position="240"/>
    </location>
    <ligand>
        <name>substrate</name>
    </ligand>
</feature>
<feature type="binding site" evidence="5 9 10">
    <location>
        <position position="242"/>
    </location>
    <ligand>
        <name>Mn(2+)</name>
        <dbReference type="ChEBI" id="CHEBI:29035"/>
    </ligand>
</feature>
<feature type="binding site" evidence="5 9 10">
    <location>
        <position position="265"/>
    </location>
    <ligand>
        <name>substrate</name>
    </ligand>
</feature>
<feature type="binding site" evidence="5 9 10">
    <location>
        <position position="266"/>
    </location>
    <ligand>
        <name>Mn(2+)</name>
        <dbReference type="ChEBI" id="CHEBI:29035"/>
    </ligand>
</feature>
<feature type="binding site" evidence="5 9">
    <location>
        <position position="266"/>
    </location>
    <ligand>
        <name>substrate</name>
    </ligand>
</feature>
<feature type="binding site" evidence="5 9 10">
    <location>
        <position position="298"/>
    </location>
    <ligand>
        <name>substrate</name>
    </ligand>
</feature>
<feature type="binding site" evidence="5 9">
    <location>
        <begin position="402"/>
        <end position="407"/>
    </location>
    <ligand>
        <name>beta-D-fructose 1,6-bisphosphate</name>
        <dbReference type="ChEBI" id="CHEBI:32966"/>
        <note>allosteric activator</note>
    </ligand>
</feature>
<feature type="binding site" evidence="5 9 10">
    <location>
        <position position="452"/>
    </location>
    <ligand>
        <name>beta-D-fructose 1,6-bisphosphate</name>
        <dbReference type="ChEBI" id="CHEBI:32966"/>
        <note>allosteric activator</note>
    </ligand>
</feature>
<feature type="binding site" evidence="5 9 10">
    <location>
        <position position="459"/>
    </location>
    <ligand>
        <name>beta-D-fructose 1,6-bisphosphate</name>
        <dbReference type="ChEBI" id="CHEBI:32966"/>
        <note>allosteric activator</note>
    </ligand>
</feature>
<feature type="binding site" evidence="5 9 10">
    <location>
        <position position="484"/>
    </location>
    <ligand>
        <name>beta-D-fructose 1,6-bisphosphate</name>
        <dbReference type="ChEBI" id="CHEBI:32966"/>
        <note>allosteric activator</note>
    </ligand>
</feature>
<feature type="site" description="Transition state stabilizer" evidence="2">
    <location>
        <position position="240"/>
    </location>
</feature>
<feature type="modified residue" description="N-acetylserine" evidence="11">
    <location>
        <position position="2"/>
    </location>
</feature>
<feature type="modified residue" description="Phosphoserine" evidence="12 14">
    <location>
        <position position="9"/>
    </location>
</feature>
<feature type="modified residue" description="Phosphoserine" evidence="13 14">
    <location>
        <position position="16"/>
    </location>
</feature>
<feature type="modified residue" description="Phosphothreonine" evidence="14">
    <location>
        <position position="31"/>
    </location>
</feature>
<feature type="modified residue" description="Phosphoserine" evidence="14">
    <location>
        <position position="70"/>
    </location>
</feature>
<feature type="modified residue" description="Phosphothreonine" evidence="14">
    <location>
        <position position="184"/>
    </location>
</feature>
<feature type="modified residue" description="Phosphoserine" evidence="11">
    <location>
        <position position="213"/>
    </location>
</feature>
<feature type="modified residue" description="Phosphoserine" evidence="14">
    <location>
        <position position="316"/>
    </location>
</feature>
<feature type="modified residue" description="Cysteine persulfide" evidence="4">
    <location>
        <position position="418"/>
    </location>
</feature>
<feature type="modified residue" description="Phosphoserine" evidence="14">
    <location>
        <position position="450"/>
    </location>
</feature>
<feature type="modified residue" description="Phosphothreonine" evidence="12 14">
    <location>
        <position position="478"/>
    </location>
</feature>
<feature type="cross-link" description="Glycyl lysine isopeptide (Lys-Gly) (interchain with G-Cter in URM1)" evidence="4">
    <location>
        <position position="119"/>
    </location>
</feature>
<feature type="cross-link" description="Glycyl lysine isopeptide (Lys-Gly) (interchain with G-Cter in URM1)" evidence="4">
    <location>
        <position position="124"/>
    </location>
</feature>
<feature type="cross-link" description="Glycyl lysine isopeptide (Lys-Gly) (interchain with G-Cter in URM1)" evidence="4">
    <location>
        <position position="161"/>
    </location>
</feature>
<feature type="cross-link" description="Glycyl lysine isopeptide (Lys-Gly) (interchain with G-Cter in URM1)" evidence="4">
    <location>
        <position position="164"/>
    </location>
</feature>
<feature type="cross-link" description="Glycyl lysine isopeptide (Lys-Gly) (interchain with G-Cter in URM1)" evidence="4">
    <location>
        <position position="166"/>
    </location>
</feature>
<feature type="cross-link" description="Glycyl lysine isopeptide (Lys-Gly) (interchain with G-Cter in ubiquitin)" evidence="15">
    <location>
        <position position="204"/>
    </location>
</feature>
<feature type="cross-link" description="Glycyl lysine isopeptide (Lys-Gly) (interchain with G-Cter in ubiquitin)" evidence="15">
    <location>
        <position position="255"/>
    </location>
</feature>
<feature type="cross-link" description="Glycyl lysine isopeptide (Lys-Gly) (interchain with G-Cter in URM1)" evidence="4">
    <location>
        <position position="292"/>
    </location>
</feature>
<feature type="cross-link" description="Glycyl lysine isopeptide (Lys-Gly) (interchain with G-Cter in URM1)" evidence="4">
    <location>
        <position position="394"/>
    </location>
</feature>
<feature type="cross-link" description="Glycyl lysine isopeptide (Lys-Gly) (interchain with G-Cter in ubiquitin); alternate" evidence="15">
    <location>
        <position position="446"/>
    </location>
</feature>
<feature type="cross-link" description="Glycyl lysine isopeptide (Lys-Gly) (interchain with G-Cter in URM1); alternate" evidence="4">
    <location>
        <position position="446"/>
    </location>
</feature>
<feature type="mutagenesis site" description="Reduces activity 1000-fold." evidence="2">
    <original>K</original>
    <variation>M</variation>
    <location>
        <position position="240"/>
    </location>
</feature>
<feature type="sequence conflict" description="In Ref. 1; CAA24631." evidence="6" ref="1">
    <original>VAASA</original>
    <variation>SLPR</variation>
    <location>
        <begin position="382"/>
        <end position="386"/>
    </location>
</feature>
<feature type="helix" evidence="16">
    <location>
        <begin position="3"/>
        <end position="8"/>
    </location>
</feature>
<feature type="strand" evidence="17">
    <location>
        <begin position="21"/>
        <end position="26"/>
    </location>
</feature>
<feature type="helix" evidence="16">
    <location>
        <begin position="29"/>
        <end position="31"/>
    </location>
</feature>
<feature type="helix" evidence="16">
    <location>
        <begin position="34"/>
        <end position="43"/>
    </location>
</feature>
<feature type="strand" evidence="16">
    <location>
        <begin position="47"/>
        <end position="49"/>
    </location>
</feature>
<feature type="helix" evidence="16">
    <location>
        <begin position="57"/>
        <end position="73"/>
    </location>
</feature>
<feature type="strand" evidence="16">
    <location>
        <begin position="82"/>
        <end position="84"/>
    </location>
</feature>
<feature type="strand" evidence="16">
    <location>
        <begin position="96"/>
        <end position="99"/>
    </location>
</feature>
<feature type="strand" evidence="16">
    <location>
        <begin position="108"/>
        <end position="112"/>
    </location>
</feature>
<feature type="turn" evidence="16">
    <location>
        <begin position="116"/>
        <end position="120"/>
    </location>
</feature>
<feature type="strand" evidence="16">
    <location>
        <begin position="126"/>
        <end position="129"/>
    </location>
</feature>
<feature type="helix" evidence="16">
    <location>
        <begin position="133"/>
        <end position="136"/>
    </location>
</feature>
<feature type="strand" evidence="16">
    <location>
        <begin position="142"/>
        <end position="145"/>
    </location>
</feature>
<feature type="turn" evidence="16">
    <location>
        <begin position="146"/>
        <end position="149"/>
    </location>
</feature>
<feature type="strand" evidence="16">
    <location>
        <begin position="150"/>
        <end position="153"/>
    </location>
</feature>
<feature type="turn" evidence="17">
    <location>
        <begin position="159"/>
        <end position="161"/>
    </location>
</feature>
<feature type="strand" evidence="16">
    <location>
        <begin position="163"/>
        <end position="167"/>
    </location>
</feature>
<feature type="strand" evidence="16">
    <location>
        <begin position="178"/>
        <end position="180"/>
    </location>
</feature>
<feature type="helix" evidence="16">
    <location>
        <begin position="193"/>
        <end position="205"/>
    </location>
</feature>
<feature type="strand" evidence="16">
    <location>
        <begin position="208"/>
        <end position="212"/>
    </location>
</feature>
<feature type="helix" evidence="16">
    <location>
        <begin position="218"/>
        <end position="232"/>
    </location>
</feature>
<feature type="strand" evidence="16">
    <location>
        <begin position="235"/>
        <end position="241"/>
    </location>
</feature>
<feature type="helix" evidence="16">
    <location>
        <begin position="245"/>
        <end position="248"/>
    </location>
</feature>
<feature type="helix" evidence="16">
    <location>
        <begin position="250"/>
        <end position="256"/>
    </location>
</feature>
<feature type="strand" evidence="16">
    <location>
        <begin position="260"/>
        <end position="262"/>
    </location>
</feature>
<feature type="helix" evidence="16">
    <location>
        <begin position="264"/>
        <end position="270"/>
    </location>
</feature>
<feature type="helix" evidence="16">
    <location>
        <begin position="273"/>
        <end position="275"/>
    </location>
</feature>
<feature type="helix" evidence="16">
    <location>
        <begin position="276"/>
        <end position="290"/>
    </location>
</feature>
<feature type="strand" evidence="16">
    <location>
        <begin position="294"/>
        <end position="296"/>
    </location>
</feature>
<feature type="helix" evidence="16">
    <location>
        <begin position="302"/>
        <end position="305"/>
    </location>
</feature>
<feature type="helix" evidence="16">
    <location>
        <begin position="312"/>
        <end position="324"/>
    </location>
</feature>
<feature type="strand" evidence="16">
    <location>
        <begin position="327"/>
        <end position="329"/>
    </location>
</feature>
<feature type="turn" evidence="16">
    <location>
        <begin position="333"/>
        <end position="337"/>
    </location>
</feature>
<feature type="helix" evidence="16">
    <location>
        <begin position="341"/>
        <end position="355"/>
    </location>
</feature>
<feature type="strand" evidence="17">
    <location>
        <begin position="357"/>
        <end position="359"/>
    </location>
</feature>
<feature type="helix" evidence="16">
    <location>
        <begin position="361"/>
        <end position="368"/>
    </location>
</feature>
<feature type="helix" evidence="16">
    <location>
        <begin position="378"/>
        <end position="393"/>
    </location>
</feature>
<feature type="strand" evidence="16">
    <location>
        <begin position="398"/>
        <end position="401"/>
    </location>
</feature>
<feature type="strand" evidence="16">
    <location>
        <begin position="403"/>
        <end position="405"/>
    </location>
</feature>
<feature type="helix" evidence="16">
    <location>
        <begin position="406"/>
        <end position="413"/>
    </location>
</feature>
<feature type="strand" evidence="16">
    <location>
        <begin position="420"/>
        <end position="425"/>
    </location>
</feature>
<feature type="helix" evidence="16">
    <location>
        <begin position="429"/>
        <end position="432"/>
    </location>
</feature>
<feature type="helix" evidence="16">
    <location>
        <begin position="433"/>
        <end position="435"/>
    </location>
</feature>
<feature type="strand" evidence="16">
    <location>
        <begin position="439"/>
        <end position="443"/>
    </location>
</feature>
<feature type="turn" evidence="16">
    <location>
        <begin position="452"/>
        <end position="454"/>
    </location>
</feature>
<feature type="helix" evidence="16">
    <location>
        <begin position="455"/>
        <end position="469"/>
    </location>
</feature>
<feature type="strand" evidence="16">
    <location>
        <begin position="478"/>
        <end position="483"/>
    </location>
</feature>
<feature type="turn" evidence="16">
    <location>
        <begin position="487"/>
        <end position="489"/>
    </location>
</feature>
<feature type="strand" evidence="16">
    <location>
        <begin position="494"/>
        <end position="499"/>
    </location>
</feature>
<sequence length="500" mass="54545">MSRLERLTSLNVVAGSDLRRTSIIGTIGPKTNNPETLVALRKAGLNIVRMNFSHGSYEYHKSVIDNARKSEELYPGRPLAIALDTKGPEIRTGTTTNDVDYPIPPNHEMIFTTDDKYAKACDDKIMYVDYKNITKVISAGRIIYVDDGVLSFQVLEVVDDKTLKVKALNAGKICSHKGVNLPGTDVDLPALSEKDKEDLRFGVKNGVHMVFASFIRTANDVLTIREVLGEQGKDVKIIVKIENQQGVNNFDEILKVTDGVMVARGDLGIEIPAPEVLAVQKKLIAKSNLAGKPVICATQMLESMTYNPRPTRAEVSDVGNAILDGADCVMLSGETAKGNYPINAVTTMAETAVIAEQAIAYLPNYDDMRNCTPKPTSTTETVAASAVAAVFEQKAKAIIVLSTSGTTPRLVSKYRPNCPIILVTRCPRAARFSHLYRGVFPFVFEKEPVSDWTDDVEARINFGIEKAKEFGILKKGDTYVSIQGFKAGAGHSNTLQVSTV</sequence>
<keyword id="KW-0002">3D-structure</keyword>
<keyword id="KW-0007">Acetylation</keyword>
<keyword id="KW-0021">Allosteric enzyme</keyword>
<keyword id="KW-0067">ATP-binding</keyword>
<keyword id="KW-0324">Glycolysis</keyword>
<keyword id="KW-1017">Isopeptide bond</keyword>
<keyword id="KW-0418">Kinase</keyword>
<keyword id="KW-0460">Magnesium</keyword>
<keyword id="KW-0464">Manganese</keyword>
<keyword id="KW-0479">Metal-binding</keyword>
<keyword id="KW-0547">Nucleotide-binding</keyword>
<keyword id="KW-0597">Phosphoprotein</keyword>
<keyword id="KW-0630">Potassium</keyword>
<keyword id="KW-0670">Pyruvate</keyword>
<keyword id="KW-1185">Reference proteome</keyword>
<keyword id="KW-0808">Transferase</keyword>
<keyword id="KW-0832">Ubl conjugation</keyword>
<protein>
    <recommendedName>
        <fullName>Pyruvate kinase 1</fullName>
        <shortName>PK 1</shortName>
        <ecNumber evidence="2">2.7.1.40</ecNumber>
    </recommendedName>
    <alternativeName>
        <fullName>cell division cycle protein 19</fullName>
    </alternativeName>
</protein>
<organism>
    <name type="scientific">Saccharomyces cerevisiae (strain ATCC 204508 / S288c)</name>
    <name type="common">Baker's yeast</name>
    <dbReference type="NCBI Taxonomy" id="559292"/>
    <lineage>
        <taxon>Eukaryota</taxon>
        <taxon>Fungi</taxon>
        <taxon>Dikarya</taxon>
        <taxon>Ascomycota</taxon>
        <taxon>Saccharomycotina</taxon>
        <taxon>Saccharomycetes</taxon>
        <taxon>Saccharomycetales</taxon>
        <taxon>Saccharomycetaceae</taxon>
        <taxon>Saccharomyces</taxon>
    </lineage>
</organism>
<accession>P00549</accession>
<accession>D6VPH8</accession>
<accession>Q2VQG5</accession>
<evidence type="ECO:0000250" key="1">
    <source>
        <dbReference type="UniProtKB" id="P14618"/>
    </source>
</evidence>
<evidence type="ECO:0000269" key="2">
    <source>
    </source>
</evidence>
<evidence type="ECO:0000269" key="3">
    <source>
    </source>
</evidence>
<evidence type="ECO:0000269" key="4">
    <source>
    </source>
</evidence>
<evidence type="ECO:0000269" key="5">
    <source>
    </source>
</evidence>
<evidence type="ECO:0000305" key="6"/>
<evidence type="ECO:0000305" key="7">
    <source>
    </source>
</evidence>
<evidence type="ECO:0000305" key="8">
    <source>
    </source>
</evidence>
<evidence type="ECO:0007744" key="9">
    <source>
        <dbReference type="PDB" id="1A3W"/>
    </source>
</evidence>
<evidence type="ECO:0007744" key="10">
    <source>
        <dbReference type="PDB" id="1A3X"/>
    </source>
</evidence>
<evidence type="ECO:0007744" key="11">
    <source>
    </source>
</evidence>
<evidence type="ECO:0007744" key="12">
    <source>
    </source>
</evidence>
<evidence type="ECO:0007744" key="13">
    <source>
    </source>
</evidence>
<evidence type="ECO:0007744" key="14">
    <source>
    </source>
</evidence>
<evidence type="ECO:0007744" key="15">
    <source>
    </source>
</evidence>
<evidence type="ECO:0007829" key="16">
    <source>
        <dbReference type="PDB" id="1A3W"/>
    </source>
</evidence>
<evidence type="ECO:0007829" key="17">
    <source>
        <dbReference type="PDB" id="1A3X"/>
    </source>
</evidence>
<name>KPYK1_YEAST</name>
<gene>
    <name type="primary">CDC19</name>
    <name type="synonym">PYK1</name>
    <name type="ordered locus">YAL038W</name>
</gene>
<comment type="catalytic activity">
    <reaction evidence="2">
        <text>pyruvate + ATP = phosphoenolpyruvate + ADP + H(+)</text>
        <dbReference type="Rhea" id="RHEA:18157"/>
        <dbReference type="ChEBI" id="CHEBI:15361"/>
        <dbReference type="ChEBI" id="CHEBI:15378"/>
        <dbReference type="ChEBI" id="CHEBI:30616"/>
        <dbReference type="ChEBI" id="CHEBI:58702"/>
        <dbReference type="ChEBI" id="CHEBI:456216"/>
        <dbReference type="EC" id="2.7.1.40"/>
    </reaction>
</comment>
<comment type="cofactor">
    <cofactor evidence="2">
        <name>Mg(2+)</name>
        <dbReference type="ChEBI" id="CHEBI:18420"/>
    </cofactor>
</comment>
<comment type="cofactor">
    <cofactor evidence="8">
        <name>K(+)</name>
        <dbReference type="ChEBI" id="CHEBI:29103"/>
    </cofactor>
</comment>
<comment type="activity regulation">
    <text>The activity is regulated by glucose levels. Activated by fructose-1,6-bisphosphate.</text>
</comment>
<comment type="biophysicochemical properties">
    <kinetics>
        <KM evidence="2">0.31 mM for phosphoenolpyruvate (with magnesium as divalent cation)</KM>
        <KM evidence="2">0.021 mM for phosphoenolpyruvate (with manganese as divalent cation)</KM>
        <KM evidence="2">1.1 mM for ADP (with magnesium as divalent cation)</KM>
        <KM evidence="2">0.24 mM for ADP (with manganese as divalent cation)</KM>
    </kinetics>
    <phDependence>
        <text evidence="2">Optimum pH is 6.0.</text>
    </phDependence>
</comment>
<comment type="pathway">
    <text>Carbohydrate degradation; glycolysis; pyruvate from D-glyceraldehyde 3-phosphate: step 5/5.</text>
</comment>
<comment type="subunit">
    <text>Homotetramer.</text>
</comment>
<comment type="PTM">
    <text evidence="4">Conjugated to URM1, a ubiquitin-like protein, in response to oxidative stresses. The attachment of URM1 to lysine residues exclusively depends on the presence of a peroxidatic cysteine in the target protein, with low specificity for the particular residue, motif, or structural context at which urmylation can occur. The URM1-conjugation reaction is mechanistically and directly coupled to the process of cysteine persulfidation, transfering the sulfur atom of the URM1 thiocarboxyl group to redox-active cysteine residues in the target protein if it is exposed to oxidative conditions.</text>
</comment>
<comment type="PTM">
    <text evidence="7">Persulfidated on specific redox-active cysteine residues. Persulfidation (also called protein S-sulfhydration) may provide a molecular mechanism that enables cells to protect vulnerable cysteine residues from reactive oxygen species (ROS) under stress conditions.</text>
</comment>
<comment type="miscellaneous">
    <text evidence="3">Present with 291000 molecules/cell in log phase SD medium.</text>
</comment>
<comment type="similarity">
    <text evidence="6">Belongs to the pyruvate kinase family.</text>
</comment>
<dbReference type="EC" id="2.7.1.40" evidence="2"/>
<dbReference type="EMBL" id="V01321">
    <property type="protein sequence ID" value="CAA24631.1"/>
    <property type="molecule type" value="Genomic_DNA"/>
</dbReference>
<dbReference type="EMBL" id="X14400">
    <property type="protein sequence ID" value="CAA32573.1"/>
    <property type="molecule type" value="Genomic_DNA"/>
</dbReference>
<dbReference type="EMBL" id="AY949862">
    <property type="protein sequence ID" value="AAY27264.1"/>
    <property type="molecule type" value="Genomic_DNA"/>
</dbReference>
<dbReference type="EMBL" id="AY949863">
    <property type="protein sequence ID" value="AAY27265.1"/>
    <property type="molecule type" value="Genomic_DNA"/>
</dbReference>
<dbReference type="EMBL" id="AY949864">
    <property type="protein sequence ID" value="AAY27266.1"/>
    <property type="molecule type" value="Genomic_DNA"/>
</dbReference>
<dbReference type="EMBL" id="AY949865">
    <property type="protein sequence ID" value="AAY27267.1"/>
    <property type="molecule type" value="Genomic_DNA"/>
</dbReference>
<dbReference type="EMBL" id="AY949866">
    <property type="protein sequence ID" value="AAY27268.1"/>
    <property type="molecule type" value="Genomic_DNA"/>
</dbReference>
<dbReference type="EMBL" id="AY949867">
    <property type="protein sequence ID" value="AAY27269.1"/>
    <property type="molecule type" value="Genomic_DNA"/>
</dbReference>
<dbReference type="EMBL" id="AY949868">
    <property type="protein sequence ID" value="AAY27270.1"/>
    <property type="molecule type" value="Genomic_DNA"/>
</dbReference>
<dbReference type="EMBL" id="AY949869">
    <property type="protein sequence ID" value="AAY27271.1"/>
    <property type="molecule type" value="Genomic_DNA"/>
</dbReference>
<dbReference type="EMBL" id="AY949870">
    <property type="protein sequence ID" value="AAY27272.1"/>
    <property type="molecule type" value="Genomic_DNA"/>
</dbReference>
<dbReference type="EMBL" id="AY949871">
    <property type="protein sequence ID" value="AAY27273.1"/>
    <property type="molecule type" value="Genomic_DNA"/>
</dbReference>
<dbReference type="EMBL" id="AY949872">
    <property type="protein sequence ID" value="AAY27274.1"/>
    <property type="molecule type" value="Genomic_DNA"/>
</dbReference>
<dbReference type="EMBL" id="AY949873">
    <property type="protein sequence ID" value="AAY27275.1"/>
    <property type="molecule type" value="Genomic_DNA"/>
</dbReference>
<dbReference type="EMBL" id="AY949874">
    <property type="protein sequence ID" value="AAY27276.1"/>
    <property type="molecule type" value="Genomic_DNA"/>
</dbReference>
<dbReference type="EMBL" id="AY949875">
    <property type="protein sequence ID" value="AAY27277.1"/>
    <property type="molecule type" value="Genomic_DNA"/>
</dbReference>
<dbReference type="EMBL" id="AY949876">
    <property type="protein sequence ID" value="AAY27278.1"/>
    <property type="molecule type" value="Genomic_DNA"/>
</dbReference>
<dbReference type="EMBL" id="AY949877">
    <property type="protein sequence ID" value="AAY27279.1"/>
    <property type="molecule type" value="Genomic_DNA"/>
</dbReference>
<dbReference type="EMBL" id="AY949878">
    <property type="protein sequence ID" value="AAY27280.1"/>
    <property type="molecule type" value="Genomic_DNA"/>
</dbReference>
<dbReference type="EMBL" id="AY949879">
    <property type="protein sequence ID" value="AAY27281.1"/>
    <property type="molecule type" value="Genomic_DNA"/>
</dbReference>
<dbReference type="EMBL" id="AY949880">
    <property type="protein sequence ID" value="AAY27282.1"/>
    <property type="molecule type" value="Genomic_DNA"/>
</dbReference>
<dbReference type="EMBL" id="AY949881">
    <property type="protein sequence ID" value="AAY27283.1"/>
    <property type="molecule type" value="Genomic_DNA"/>
</dbReference>
<dbReference type="EMBL" id="AY949882">
    <property type="protein sequence ID" value="AAY27284.1"/>
    <property type="molecule type" value="Genomic_DNA"/>
</dbReference>
<dbReference type="EMBL" id="AY949883">
    <property type="protein sequence ID" value="AAY27285.1"/>
    <property type="molecule type" value="Genomic_DNA"/>
</dbReference>
<dbReference type="EMBL" id="AY949884">
    <property type="protein sequence ID" value="AAY27286.1"/>
    <property type="molecule type" value="Genomic_DNA"/>
</dbReference>
<dbReference type="EMBL" id="AY949885">
    <property type="protein sequence ID" value="AAY27287.1"/>
    <property type="molecule type" value="Genomic_DNA"/>
</dbReference>
<dbReference type="EMBL" id="AY949886">
    <property type="protein sequence ID" value="AAY27288.1"/>
    <property type="molecule type" value="Genomic_DNA"/>
</dbReference>
<dbReference type="EMBL" id="AY949887">
    <property type="protein sequence ID" value="AAY27289.1"/>
    <property type="molecule type" value="Genomic_DNA"/>
</dbReference>
<dbReference type="EMBL" id="AY949888">
    <property type="protein sequence ID" value="AAY27290.1"/>
    <property type="molecule type" value="Genomic_DNA"/>
</dbReference>
<dbReference type="EMBL" id="AY949889">
    <property type="protein sequence ID" value="AAY27291.1"/>
    <property type="molecule type" value="Genomic_DNA"/>
</dbReference>
<dbReference type="EMBL" id="AY949890">
    <property type="protein sequence ID" value="AAY27292.1"/>
    <property type="molecule type" value="Genomic_DNA"/>
</dbReference>
<dbReference type="EMBL" id="U12980">
    <property type="protein sequence ID" value="AAC04993.1"/>
    <property type="molecule type" value="Genomic_DNA"/>
</dbReference>
<dbReference type="EMBL" id="AY693107">
    <property type="protein sequence ID" value="AAT93126.1"/>
    <property type="molecule type" value="Genomic_DNA"/>
</dbReference>
<dbReference type="EMBL" id="BK006935">
    <property type="protein sequence ID" value="DAA06948.1"/>
    <property type="molecule type" value="Genomic_DNA"/>
</dbReference>
<dbReference type="PIR" id="S05764">
    <property type="entry name" value="KIBYP"/>
</dbReference>
<dbReference type="RefSeq" id="NP_009362.1">
    <property type="nucleotide sequence ID" value="NM_001178183.1"/>
</dbReference>
<dbReference type="PDB" id="1A3W">
    <property type="method" value="X-ray"/>
    <property type="resolution" value="3.00 A"/>
    <property type="chains" value="A/B=1-500"/>
</dbReference>
<dbReference type="PDB" id="1A3X">
    <property type="method" value="X-ray"/>
    <property type="resolution" value="3.00 A"/>
    <property type="chains" value="A/B=1-500"/>
</dbReference>
<dbReference type="PDBsum" id="1A3W"/>
<dbReference type="PDBsum" id="1A3X"/>
<dbReference type="SMR" id="P00549"/>
<dbReference type="BioGRID" id="31727">
    <property type="interactions" value="390"/>
</dbReference>
<dbReference type="ComplexPortal" id="CPX-9181">
    <property type="entry name" value="SESAME metabolic enzyme complex"/>
</dbReference>
<dbReference type="DIP" id="DIP-4124N"/>
<dbReference type="ELM" id="P00549"/>
<dbReference type="FunCoup" id="P00549">
    <property type="interactions" value="1187"/>
</dbReference>
<dbReference type="IntAct" id="P00549">
    <property type="interactions" value="235"/>
</dbReference>
<dbReference type="MINT" id="P00549"/>
<dbReference type="STRING" id="4932.YAL038W"/>
<dbReference type="MoonProt" id="P00549"/>
<dbReference type="CarbonylDB" id="P00549"/>
<dbReference type="iPTMnet" id="P00549"/>
<dbReference type="PaxDb" id="4932-YAL038W"/>
<dbReference type="PeptideAtlas" id="P00549"/>
<dbReference type="TopDownProteomics" id="P00549"/>
<dbReference type="EnsemblFungi" id="YAL038W_mRNA">
    <property type="protein sequence ID" value="YAL038W"/>
    <property type="gene ID" value="YAL038W"/>
</dbReference>
<dbReference type="GeneID" id="851193"/>
<dbReference type="KEGG" id="sce:YAL038W"/>
<dbReference type="AGR" id="SGD:S000000036"/>
<dbReference type="SGD" id="S000000036">
    <property type="gene designation" value="CDC19"/>
</dbReference>
<dbReference type="VEuPathDB" id="FungiDB:YAL038W"/>
<dbReference type="eggNOG" id="KOG2323">
    <property type="taxonomic scope" value="Eukaryota"/>
</dbReference>
<dbReference type="GeneTree" id="ENSGT00390000008859"/>
<dbReference type="HOGENOM" id="CLU_015439_0_1_1"/>
<dbReference type="InParanoid" id="P00549"/>
<dbReference type="OMA" id="RVHHIGE"/>
<dbReference type="OrthoDB" id="108365at2759"/>
<dbReference type="BioCyc" id="YEAST:YAL038W-MONOMER"/>
<dbReference type="Reactome" id="R-SCE-6798695">
    <property type="pathway name" value="Neutrophil degranulation"/>
</dbReference>
<dbReference type="Reactome" id="R-SCE-70171">
    <property type="pathway name" value="Glycolysis"/>
</dbReference>
<dbReference type="Reactome" id="R-SCE-70268">
    <property type="pathway name" value="Pyruvate metabolism"/>
</dbReference>
<dbReference type="Reactome" id="R-SCE-9861718">
    <property type="pathway name" value="Regulation of pyruvate metabolism"/>
</dbReference>
<dbReference type="SABIO-RK" id="P00549"/>
<dbReference type="UniPathway" id="UPA00109">
    <property type="reaction ID" value="UER00188"/>
</dbReference>
<dbReference type="BioGRID-ORCS" id="851193">
    <property type="hits" value="7 hits in 10 CRISPR screens"/>
</dbReference>
<dbReference type="CD-CODE" id="E03F929F">
    <property type="entry name" value="Stress granule"/>
</dbReference>
<dbReference type="EvolutionaryTrace" id="P00549"/>
<dbReference type="PRO" id="PR:P00549"/>
<dbReference type="Proteomes" id="UP000002311">
    <property type="component" value="Chromosome I"/>
</dbReference>
<dbReference type="RNAct" id="P00549">
    <property type="molecule type" value="protein"/>
</dbReference>
<dbReference type="GO" id="GO:0005737">
    <property type="term" value="C:cytoplasm"/>
    <property type="evidence" value="ECO:0000314"/>
    <property type="project" value="SGD"/>
</dbReference>
<dbReference type="GO" id="GO:0005886">
    <property type="term" value="C:plasma membrane"/>
    <property type="evidence" value="ECO:0007005"/>
    <property type="project" value="SGD"/>
</dbReference>
<dbReference type="GO" id="GO:0005524">
    <property type="term" value="F:ATP binding"/>
    <property type="evidence" value="ECO:0007669"/>
    <property type="project" value="UniProtKB-KW"/>
</dbReference>
<dbReference type="GO" id="GO:0016301">
    <property type="term" value="F:kinase activity"/>
    <property type="evidence" value="ECO:0007669"/>
    <property type="project" value="UniProtKB-KW"/>
</dbReference>
<dbReference type="GO" id="GO:0000287">
    <property type="term" value="F:magnesium ion binding"/>
    <property type="evidence" value="ECO:0007669"/>
    <property type="project" value="InterPro"/>
</dbReference>
<dbReference type="GO" id="GO:0030955">
    <property type="term" value="F:potassium ion binding"/>
    <property type="evidence" value="ECO:0007669"/>
    <property type="project" value="InterPro"/>
</dbReference>
<dbReference type="GO" id="GO:0004743">
    <property type="term" value="F:pyruvate kinase activity"/>
    <property type="evidence" value="ECO:0000314"/>
    <property type="project" value="SGD"/>
</dbReference>
<dbReference type="GO" id="GO:0006096">
    <property type="term" value="P:glycolytic process"/>
    <property type="evidence" value="ECO:0000315"/>
    <property type="project" value="SGD"/>
</dbReference>
<dbReference type="CDD" id="cd00288">
    <property type="entry name" value="Pyruvate_Kinase"/>
    <property type="match status" value="1"/>
</dbReference>
<dbReference type="FunFam" id="2.40.33.10:FF:000001">
    <property type="entry name" value="Pyruvate kinase"/>
    <property type="match status" value="1"/>
</dbReference>
<dbReference type="FunFam" id="3.20.20.60:FF:000025">
    <property type="entry name" value="Pyruvate kinase"/>
    <property type="match status" value="1"/>
</dbReference>
<dbReference type="FunFam" id="3.40.1380.20:FF:000001">
    <property type="entry name" value="Pyruvate kinase"/>
    <property type="match status" value="1"/>
</dbReference>
<dbReference type="Gene3D" id="3.20.20.60">
    <property type="entry name" value="Phosphoenolpyruvate-binding domains"/>
    <property type="match status" value="1"/>
</dbReference>
<dbReference type="Gene3D" id="2.40.33.10">
    <property type="entry name" value="PK beta-barrel domain-like"/>
    <property type="match status" value="1"/>
</dbReference>
<dbReference type="Gene3D" id="3.40.1380.20">
    <property type="entry name" value="Pyruvate kinase, C-terminal domain"/>
    <property type="match status" value="1"/>
</dbReference>
<dbReference type="InterPro" id="IPR001697">
    <property type="entry name" value="Pyr_Knase"/>
</dbReference>
<dbReference type="InterPro" id="IPR015813">
    <property type="entry name" value="Pyrv/PenolPyrv_kinase-like_dom"/>
</dbReference>
<dbReference type="InterPro" id="IPR040442">
    <property type="entry name" value="Pyrv_kinase-like_dom_sf"/>
</dbReference>
<dbReference type="InterPro" id="IPR011037">
    <property type="entry name" value="Pyrv_Knase-like_insert_dom_sf"/>
</dbReference>
<dbReference type="InterPro" id="IPR018209">
    <property type="entry name" value="Pyrv_Knase_AS"/>
</dbReference>
<dbReference type="InterPro" id="IPR015793">
    <property type="entry name" value="Pyrv_Knase_brl"/>
</dbReference>
<dbReference type="InterPro" id="IPR015795">
    <property type="entry name" value="Pyrv_Knase_C"/>
</dbReference>
<dbReference type="InterPro" id="IPR036918">
    <property type="entry name" value="Pyrv_Knase_C_sf"/>
</dbReference>
<dbReference type="InterPro" id="IPR015806">
    <property type="entry name" value="Pyrv_Knase_insert_dom_sf"/>
</dbReference>
<dbReference type="NCBIfam" id="NF004491">
    <property type="entry name" value="PRK05826.1"/>
    <property type="match status" value="1"/>
</dbReference>
<dbReference type="NCBIfam" id="NF004978">
    <property type="entry name" value="PRK06354.1"/>
    <property type="match status" value="1"/>
</dbReference>
<dbReference type="NCBIfam" id="TIGR01064">
    <property type="entry name" value="pyruv_kin"/>
    <property type="match status" value="1"/>
</dbReference>
<dbReference type="PANTHER" id="PTHR11817">
    <property type="entry name" value="PYRUVATE KINASE"/>
    <property type="match status" value="1"/>
</dbReference>
<dbReference type="Pfam" id="PF00224">
    <property type="entry name" value="PK"/>
    <property type="match status" value="1"/>
</dbReference>
<dbReference type="Pfam" id="PF02887">
    <property type="entry name" value="PK_C"/>
    <property type="match status" value="1"/>
</dbReference>
<dbReference type="PRINTS" id="PR01050">
    <property type="entry name" value="PYRUVTKNASE"/>
</dbReference>
<dbReference type="SUPFAM" id="SSF51621">
    <property type="entry name" value="Phosphoenolpyruvate/pyruvate domain"/>
    <property type="match status" value="1"/>
</dbReference>
<dbReference type="SUPFAM" id="SSF50800">
    <property type="entry name" value="PK beta-barrel domain-like"/>
    <property type="match status" value="1"/>
</dbReference>
<dbReference type="SUPFAM" id="SSF52935">
    <property type="entry name" value="PK C-terminal domain-like"/>
    <property type="match status" value="1"/>
</dbReference>
<dbReference type="PROSITE" id="PS00110">
    <property type="entry name" value="PYRUVATE_KINASE"/>
    <property type="match status" value="1"/>
</dbReference>
<reference key="1">
    <citation type="journal article" date="1989" name="FEBS Lett.">
        <title>The yeast pyruvate kinase gene does not contain a string of non-preferred codons: revised nucleotide sequence.</title>
        <authorList>
            <person name="McNally T."/>
            <person name="Purvis I.J."/>
            <person name="Fothergill-Gilmore L.A."/>
            <person name="Brown A.L.P."/>
        </authorList>
    </citation>
    <scope>NUCLEOTIDE SEQUENCE [GENOMIC DNA]</scope>
</reference>
<reference key="2">
    <citation type="journal article" date="1983" name="J. Biol. Chem.">
        <title>The isolation, characterization, and sequence of the pyruvate kinase gene of Saccharomyces cerevisiae.</title>
        <authorList>
            <person name="Burke R.L."/>
            <person name="Tekamp-Olson P."/>
            <person name="Najarian R."/>
        </authorList>
    </citation>
    <scope>NUCLEOTIDE SEQUENCE [GENOMIC DNA]</scope>
</reference>
<reference key="3">
    <citation type="journal article" date="2006" name="FEMS Yeast Res.">
        <title>Population structure and gene evolution in Saccharomyces cerevisiae.</title>
        <authorList>
            <person name="Aa E."/>
            <person name="Townsend J.P."/>
            <person name="Adams R.I."/>
            <person name="Nielsen K.M."/>
            <person name="Taylor J.W."/>
        </authorList>
    </citation>
    <scope>NUCLEOTIDE SEQUENCE [GENOMIC DNA]</scope>
    <source>
        <strain>ATCC 76625 / YPH499</strain>
        <strain>Ba194</strain>
        <strain>Bb32</strain>
        <strain>Fy93</strain>
        <strain>M1-2A</strain>
        <strain>M2-8</strain>
        <strain>M5-7A</strain>
        <strain>M5-7B</strain>
        <strain>M7-8D</strain>
        <strain>MMR2-1</strain>
        <strain>MMR2-3</strain>
        <strain>MMR2-5</strain>
        <strain>MMW1-12</strain>
        <strain>MMW1-15</strain>
        <strain>MMW1-15h2</strain>
        <strain>MMW1-2</strain>
        <strain>MMW1-2h2</strain>
        <strain>ORM1-1</strain>
        <strain>Sgu52E</strain>
        <strain>Sgu52F</strain>
        <strain>YPS396</strain>
        <strain>YPS400</strain>
        <strain>YPS598</strain>
        <strain>YPS600</strain>
        <strain>YPS602</strain>
        <strain>YPS604</strain>
        <strain>YPS606</strain>
        <strain>YPS608</strain>
        <strain>YPS610</strain>
    </source>
</reference>
<reference key="4">
    <citation type="journal article" date="1995" name="Proc. Natl. Acad. Sci. U.S.A.">
        <title>The nucleotide sequence of chromosome I from Saccharomyces cerevisiae.</title>
        <authorList>
            <person name="Bussey H."/>
            <person name="Kaback D.B."/>
            <person name="Zhong W.-W."/>
            <person name="Vo D.H."/>
            <person name="Clark M.W."/>
            <person name="Fortin N."/>
            <person name="Hall J."/>
            <person name="Ouellette B.F.F."/>
            <person name="Keng T."/>
            <person name="Barton A.B."/>
            <person name="Su Y."/>
            <person name="Davies C.J."/>
            <person name="Storms R.K."/>
        </authorList>
    </citation>
    <scope>NUCLEOTIDE SEQUENCE [LARGE SCALE GENOMIC DNA]</scope>
    <source>
        <strain>ATCC 204508 / S288c</strain>
    </source>
</reference>
<reference key="5">
    <citation type="journal article" date="2014" name="G3 (Bethesda)">
        <title>The reference genome sequence of Saccharomyces cerevisiae: Then and now.</title>
        <authorList>
            <person name="Engel S.R."/>
            <person name="Dietrich F.S."/>
            <person name="Fisk D.G."/>
            <person name="Binkley G."/>
            <person name="Balakrishnan R."/>
            <person name="Costanzo M.C."/>
            <person name="Dwight S.S."/>
            <person name="Hitz B.C."/>
            <person name="Karra K."/>
            <person name="Nash R.S."/>
            <person name="Weng S."/>
            <person name="Wong E.D."/>
            <person name="Lloyd P."/>
            <person name="Skrzypek M.S."/>
            <person name="Miyasato S.R."/>
            <person name="Simison M."/>
            <person name="Cherry J.M."/>
        </authorList>
    </citation>
    <scope>GENOME REANNOTATION</scope>
    <source>
        <strain>ATCC 204508 / S288c</strain>
    </source>
</reference>
<reference key="6">
    <citation type="journal article" date="2007" name="Genome Res.">
        <title>Approaching a complete repository of sequence-verified protein-encoding clones for Saccharomyces cerevisiae.</title>
        <authorList>
            <person name="Hu Y."/>
            <person name="Rolfs A."/>
            <person name="Bhullar B."/>
            <person name="Murthy T.V.S."/>
            <person name="Zhu C."/>
            <person name="Berger M.F."/>
            <person name="Camargo A.A."/>
            <person name="Kelley F."/>
            <person name="McCarron S."/>
            <person name="Jepson D."/>
            <person name="Richardson A."/>
            <person name="Raphael J."/>
            <person name="Moreira D."/>
            <person name="Taycher E."/>
            <person name="Zuo D."/>
            <person name="Mohr S."/>
            <person name="Kane M.F."/>
            <person name="Williamson J."/>
            <person name="Simpson A.J.G."/>
            <person name="Bulyk M.L."/>
            <person name="Harlow E."/>
            <person name="Marsischky G."/>
            <person name="Kolodner R.D."/>
            <person name="LaBaer J."/>
        </authorList>
    </citation>
    <scope>NUCLEOTIDE SEQUENCE [GENOMIC DNA]</scope>
    <source>
        <strain>ATCC 204508 / S288c</strain>
    </source>
</reference>
<reference key="7">
    <citation type="journal article" date="1999" name="Biochemistry">
        <title>Role of lysine 240 in the mechanism of yeast pyruvate kinase catalysis.</title>
        <authorList>
            <person name="Bollenbach T.J."/>
            <person name="Mesecar A.D."/>
            <person name="Nowak T."/>
        </authorList>
    </citation>
    <scope>CATALYTIC ACTIVITY</scope>
    <scope>COFACTOR</scope>
    <scope>BIOPHYSICOCHEMICAL PROPERTIES</scope>
    <scope>MUTAGENESIS OF LYS-240</scope>
</reference>
<reference key="8">
    <citation type="journal article" date="2003" name="Nature">
        <title>Global analysis of protein expression in yeast.</title>
        <authorList>
            <person name="Ghaemmaghami S."/>
            <person name="Huh W.-K."/>
            <person name="Bower K."/>
            <person name="Howson R.W."/>
            <person name="Belle A."/>
            <person name="Dephoure N."/>
            <person name="O'Shea E.K."/>
            <person name="Weissman J.S."/>
        </authorList>
    </citation>
    <scope>LEVEL OF PROTEIN EXPRESSION [LARGE SCALE ANALYSIS]</scope>
</reference>
<reference key="9">
    <citation type="journal article" date="2005" name="Mol. Cell. Proteomics">
        <title>Quantitative phosphoproteomics applied to the yeast pheromone signaling pathway.</title>
        <authorList>
            <person name="Gruhler A."/>
            <person name="Olsen J.V."/>
            <person name="Mohammed S."/>
            <person name="Mortensen P."/>
            <person name="Faergeman N.J."/>
            <person name="Mann M."/>
            <person name="Jensen O.N."/>
        </authorList>
    </citation>
    <scope>IDENTIFICATION BY MASS SPECTROMETRY [LARGE SCALE ANALYSIS]</scope>
    <source>
        <strain>YAL6B</strain>
    </source>
</reference>
<reference key="10">
    <citation type="journal article" date="2007" name="J. Proteome Res.">
        <title>Large-scale phosphorylation analysis of alpha-factor-arrested Saccharomyces cerevisiae.</title>
        <authorList>
            <person name="Li X."/>
            <person name="Gerber S.A."/>
            <person name="Rudner A.D."/>
            <person name="Beausoleil S.A."/>
            <person name="Haas W."/>
            <person name="Villen J."/>
            <person name="Elias J.E."/>
            <person name="Gygi S.P."/>
        </authorList>
    </citation>
    <scope>PHOSPHORYLATION [LARGE SCALE ANALYSIS] AT SER-9 AND THR-478</scope>
    <scope>IDENTIFICATION BY MASS SPECTROMETRY [LARGE SCALE ANALYSIS]</scope>
    <source>
        <strain>ADR376</strain>
    </source>
</reference>
<reference key="11">
    <citation type="journal article" date="2007" name="Proc. Natl. Acad. Sci. U.S.A.">
        <title>Analysis of phosphorylation sites on proteins from Saccharomyces cerevisiae by electron transfer dissociation (ETD) mass spectrometry.</title>
        <authorList>
            <person name="Chi A."/>
            <person name="Huttenhower C."/>
            <person name="Geer L.Y."/>
            <person name="Coon J.J."/>
            <person name="Syka J.E.P."/>
            <person name="Bai D.L."/>
            <person name="Shabanowitz J."/>
            <person name="Burke D.J."/>
            <person name="Troyanskaya O.G."/>
            <person name="Hunt D.F."/>
        </authorList>
    </citation>
    <scope>ACETYLATION [LARGE SCALE ANALYSIS] AT SER-2</scope>
    <scope>PHOSPHORYLATION [LARGE SCALE ANALYSIS] AT SER-213</scope>
    <scope>CLEAVAGE OF INITIATOR METHIONINE [LARGE SCALE ANALYSIS]</scope>
    <scope>IDENTIFICATION BY MASS SPECTROMETRY [LARGE SCALE ANALYSIS]</scope>
</reference>
<reference key="12">
    <citation type="journal article" date="2008" name="Mol. Cell. Proteomics">
        <title>A multidimensional chromatography technology for in-depth phosphoproteome analysis.</title>
        <authorList>
            <person name="Albuquerque C.P."/>
            <person name="Smolka M.B."/>
            <person name="Payne S.H."/>
            <person name="Bafna V."/>
            <person name="Eng J."/>
            <person name="Zhou H."/>
        </authorList>
    </citation>
    <scope>PHOSPHORYLATION [LARGE SCALE ANALYSIS] AT SER-16</scope>
    <scope>IDENTIFICATION BY MASS SPECTROMETRY [LARGE SCALE ANALYSIS]</scope>
</reference>
<reference key="13">
    <citation type="journal article" date="2009" name="Science">
        <title>Global analysis of Cdk1 substrate phosphorylation sites provides insights into evolution.</title>
        <authorList>
            <person name="Holt L.J."/>
            <person name="Tuch B.B."/>
            <person name="Villen J."/>
            <person name="Johnson A.D."/>
            <person name="Gygi S.P."/>
            <person name="Morgan D.O."/>
        </authorList>
    </citation>
    <scope>PHOSPHORYLATION [LARGE SCALE ANALYSIS] AT SER-9; SER-16; THR-31; SER-70; THR-184; SER-316; SER-450 AND THR-478</scope>
    <scope>IDENTIFICATION BY MASS SPECTROMETRY [LARGE SCALE ANALYSIS]</scope>
</reference>
<reference key="14">
    <citation type="journal article" date="2012" name="Proteomics">
        <title>Sites of ubiquitin attachment in Saccharomyces cerevisiae.</title>
        <authorList>
            <person name="Starita L.M."/>
            <person name="Lo R.S."/>
            <person name="Eng J.K."/>
            <person name="von Haller P.D."/>
            <person name="Fields S."/>
        </authorList>
    </citation>
    <scope>UBIQUITINATION [LARGE SCALE ANALYSIS] AT LYS-204; LYS-255 AND LYS-446</scope>
    <scope>IDENTIFICATION BY MASS SPECTROMETRY [LARGE SCALE ANALYSIS]</scope>
</reference>
<reference key="15">
    <citation type="journal article" date="2022" name="EMBO J.">
        <title>E2/E3-independent ubiquitin-like protein conjugation by Urm1 is directly coupled to cysteine persulfidation.</title>
        <authorList>
            <person name="Ravichandran K.E."/>
            <person name="Kaduhr L."/>
            <person name="Skupien-Rabian B."/>
            <person name="Shvetsova E."/>
            <person name="Sokolowski M."/>
            <person name="Krutyholowa R."/>
            <person name="Kwasna D."/>
            <person name="Brachmann C."/>
            <person name="Lin S."/>
            <person name="Guzman Perez S."/>
            <person name="Wilk P."/>
            <person name="Koesters M."/>
            <person name="Grudnik P."/>
            <person name="Jankowska U."/>
            <person name="Leidel S.A."/>
            <person name="Schaffrath R."/>
            <person name="Glatt S."/>
        </authorList>
    </citation>
    <scope>SULFHYDRATION AT CYS-418</scope>
    <scope>URMYLATION AT LYS-119; LYS-124; LYS-161; LYS-164; LYS-166; LYS-292; LYS-394 AND LYS-446</scope>
</reference>
<reference key="16">
    <citation type="journal article" date="1998" name="Structure">
        <title>The allosteric regulation of pyruvate kinase by fructose-1,6-bisphosphate.</title>
        <authorList>
            <person name="Jurica M.S."/>
            <person name="Mesecar A."/>
            <person name="Heath P.J."/>
            <person name="Shi W."/>
            <person name="Nowak T."/>
            <person name="Stoddard B.L."/>
        </authorList>
    </citation>
    <scope>X-RAY CRYSTALLOGRAPHY (3.00 ANGSTROMS) IN COMPLEX WITH SUBSTRATE ANALOG; FRUCTOSE-1-6-DIPHOSPHATE; MANGANESE IONS AND POTASSIUM IONS</scope>
</reference>
<proteinExistence type="evidence at protein level"/>